<dbReference type="EC" id="6.1.1.14" evidence="1"/>
<dbReference type="EMBL" id="CP000510">
    <property type="protein sequence ID" value="ABM05400.1"/>
    <property type="molecule type" value="Genomic_DNA"/>
</dbReference>
<dbReference type="RefSeq" id="WP_011771948.1">
    <property type="nucleotide sequence ID" value="NC_008709.1"/>
</dbReference>
<dbReference type="SMR" id="A1T0Y5"/>
<dbReference type="STRING" id="357804.Ping_3726"/>
<dbReference type="KEGG" id="pin:Ping_3726"/>
<dbReference type="eggNOG" id="COG0751">
    <property type="taxonomic scope" value="Bacteria"/>
</dbReference>
<dbReference type="HOGENOM" id="CLU_007220_2_2_6"/>
<dbReference type="OrthoDB" id="9775440at2"/>
<dbReference type="Proteomes" id="UP000000639">
    <property type="component" value="Chromosome"/>
</dbReference>
<dbReference type="GO" id="GO:0005829">
    <property type="term" value="C:cytosol"/>
    <property type="evidence" value="ECO:0007669"/>
    <property type="project" value="TreeGrafter"/>
</dbReference>
<dbReference type="GO" id="GO:0004814">
    <property type="term" value="F:arginine-tRNA ligase activity"/>
    <property type="evidence" value="ECO:0007669"/>
    <property type="project" value="InterPro"/>
</dbReference>
<dbReference type="GO" id="GO:0005524">
    <property type="term" value="F:ATP binding"/>
    <property type="evidence" value="ECO:0007669"/>
    <property type="project" value="UniProtKB-UniRule"/>
</dbReference>
<dbReference type="GO" id="GO:0004820">
    <property type="term" value="F:glycine-tRNA ligase activity"/>
    <property type="evidence" value="ECO:0007669"/>
    <property type="project" value="UniProtKB-UniRule"/>
</dbReference>
<dbReference type="GO" id="GO:0006420">
    <property type="term" value="P:arginyl-tRNA aminoacylation"/>
    <property type="evidence" value="ECO:0007669"/>
    <property type="project" value="InterPro"/>
</dbReference>
<dbReference type="GO" id="GO:0006426">
    <property type="term" value="P:glycyl-tRNA aminoacylation"/>
    <property type="evidence" value="ECO:0007669"/>
    <property type="project" value="UniProtKB-UniRule"/>
</dbReference>
<dbReference type="Gene3D" id="1.10.730.10">
    <property type="entry name" value="Isoleucyl-tRNA Synthetase, Domain 1"/>
    <property type="match status" value="1"/>
</dbReference>
<dbReference type="HAMAP" id="MF_00255">
    <property type="entry name" value="Gly_tRNA_synth_beta"/>
    <property type="match status" value="1"/>
</dbReference>
<dbReference type="InterPro" id="IPR008909">
    <property type="entry name" value="DALR_anticod-bd"/>
</dbReference>
<dbReference type="InterPro" id="IPR015944">
    <property type="entry name" value="Gly-tRNA-synth_bsu"/>
</dbReference>
<dbReference type="InterPro" id="IPR006194">
    <property type="entry name" value="Gly-tRNA-synth_heterodimer"/>
</dbReference>
<dbReference type="NCBIfam" id="TIGR00211">
    <property type="entry name" value="glyS"/>
    <property type="match status" value="1"/>
</dbReference>
<dbReference type="PANTHER" id="PTHR30075:SF2">
    <property type="entry name" value="GLYCINE--TRNA LIGASE, CHLOROPLASTIC_MITOCHONDRIAL 2"/>
    <property type="match status" value="1"/>
</dbReference>
<dbReference type="PANTHER" id="PTHR30075">
    <property type="entry name" value="GLYCYL-TRNA SYNTHETASE"/>
    <property type="match status" value="1"/>
</dbReference>
<dbReference type="Pfam" id="PF05746">
    <property type="entry name" value="DALR_1"/>
    <property type="match status" value="1"/>
</dbReference>
<dbReference type="Pfam" id="PF02092">
    <property type="entry name" value="tRNA_synt_2f"/>
    <property type="match status" value="1"/>
</dbReference>
<dbReference type="PRINTS" id="PR01045">
    <property type="entry name" value="TRNASYNTHGB"/>
</dbReference>
<dbReference type="SMART" id="SM00836">
    <property type="entry name" value="DALR_1"/>
    <property type="match status" value="1"/>
</dbReference>
<dbReference type="SUPFAM" id="SSF109604">
    <property type="entry name" value="HD-domain/PDEase-like"/>
    <property type="match status" value="1"/>
</dbReference>
<dbReference type="PROSITE" id="PS50861">
    <property type="entry name" value="AA_TRNA_LIGASE_II_GLYAB"/>
    <property type="match status" value="1"/>
</dbReference>
<sequence>MAQENLLIELGTEELPPKSLRQLAESFASNVEAELNKAELSFDSVRWLASPRRLALVIANLSDSQADKIVEKRGPAVNVAFDAEGQATKAAQGWARSNGITVEQAERLITDKGEWLLFKSEVKGLSVAELIPEIAANALAKLPISKPMRWGSSSTQFIRPVHTVTMLFGSRLIQGELLGVASDRIIRGHRFLGEAELIIDHADQYETLLDDSGKVIVDYERRKAIIRDQVEALAAHENGVADIDESLLEEVTSLVEWPVTLVGSFEDKFLDVPSEALIYTMKDNQKYFPVLDKDGKLLPRFIFVSNIVSRDPAQVISGNEKVIRPRLADAEFFFETDKKKTLASRLESLSSVLFQQKLGTLKEKSERIANVAEDIALQIKADTKHAQRAGLLSKTDLMTDMVMEFPDVQGIMGMHYALHDGEEQEVAIALNEQYLPRFAGDKLPTSLVACAVSLADKLDTLVGIFGIGQAPKGAADPFALRRAAIGLLRIITNKNLDLDLVELVEIAKLQYGHKLTNDNVVQDVVDFLFARFRATYQANGYSVELIQSVLVRRPTKPVDFEKRLQAVAKFQTLPEAAPIAAANKRISNILAKVKGEINAQVDPSLLQEPAEIKLSEILGSLESTLRPLFDNLDYESALFELASLNEPVDEFFDNVMVMAEDPAIKANRLAILNRLRNLFLQIADVSVL</sequence>
<reference key="1">
    <citation type="journal article" date="2008" name="BMC Genomics">
        <title>Genomics of an extreme psychrophile, Psychromonas ingrahamii.</title>
        <authorList>
            <person name="Riley M."/>
            <person name="Staley J.T."/>
            <person name="Danchin A."/>
            <person name="Wang T.Z."/>
            <person name="Brettin T.S."/>
            <person name="Hauser L.J."/>
            <person name="Land M.L."/>
            <person name="Thompson L.S."/>
        </authorList>
    </citation>
    <scope>NUCLEOTIDE SEQUENCE [LARGE SCALE GENOMIC DNA]</scope>
    <source>
        <strain>DSM 17664 / CCUG 51855 / 37</strain>
    </source>
</reference>
<organism>
    <name type="scientific">Psychromonas ingrahamii (strain DSM 17664 / CCUG 51855 / 37)</name>
    <dbReference type="NCBI Taxonomy" id="357804"/>
    <lineage>
        <taxon>Bacteria</taxon>
        <taxon>Pseudomonadati</taxon>
        <taxon>Pseudomonadota</taxon>
        <taxon>Gammaproteobacteria</taxon>
        <taxon>Alteromonadales</taxon>
        <taxon>Psychromonadaceae</taxon>
        <taxon>Psychromonas</taxon>
    </lineage>
</organism>
<accession>A1T0Y5</accession>
<evidence type="ECO:0000255" key="1">
    <source>
        <dbReference type="HAMAP-Rule" id="MF_00255"/>
    </source>
</evidence>
<comment type="catalytic activity">
    <reaction evidence="1">
        <text>tRNA(Gly) + glycine + ATP = glycyl-tRNA(Gly) + AMP + diphosphate</text>
        <dbReference type="Rhea" id="RHEA:16013"/>
        <dbReference type="Rhea" id="RHEA-COMP:9664"/>
        <dbReference type="Rhea" id="RHEA-COMP:9683"/>
        <dbReference type="ChEBI" id="CHEBI:30616"/>
        <dbReference type="ChEBI" id="CHEBI:33019"/>
        <dbReference type="ChEBI" id="CHEBI:57305"/>
        <dbReference type="ChEBI" id="CHEBI:78442"/>
        <dbReference type="ChEBI" id="CHEBI:78522"/>
        <dbReference type="ChEBI" id="CHEBI:456215"/>
        <dbReference type="EC" id="6.1.1.14"/>
    </reaction>
</comment>
<comment type="subunit">
    <text evidence="1">Tetramer of two alpha and two beta subunits.</text>
</comment>
<comment type="subcellular location">
    <subcellularLocation>
        <location evidence="1">Cytoplasm</location>
    </subcellularLocation>
</comment>
<comment type="similarity">
    <text evidence="1">Belongs to the class-II aminoacyl-tRNA synthetase family.</text>
</comment>
<keyword id="KW-0030">Aminoacyl-tRNA synthetase</keyword>
<keyword id="KW-0067">ATP-binding</keyword>
<keyword id="KW-0963">Cytoplasm</keyword>
<keyword id="KW-0436">Ligase</keyword>
<keyword id="KW-0547">Nucleotide-binding</keyword>
<keyword id="KW-0648">Protein biosynthesis</keyword>
<keyword id="KW-1185">Reference proteome</keyword>
<feature type="chain" id="PRO_1000006396" description="Glycine--tRNA ligase beta subunit">
    <location>
        <begin position="1"/>
        <end position="688"/>
    </location>
</feature>
<proteinExistence type="inferred from homology"/>
<gene>
    <name evidence="1" type="primary">glyS</name>
    <name type="ordered locus">Ping_3726</name>
</gene>
<name>SYGB_PSYIN</name>
<protein>
    <recommendedName>
        <fullName evidence="1">Glycine--tRNA ligase beta subunit</fullName>
        <ecNumber evidence="1">6.1.1.14</ecNumber>
    </recommendedName>
    <alternativeName>
        <fullName evidence="1">Glycyl-tRNA synthetase beta subunit</fullName>
        <shortName evidence="1">GlyRS</shortName>
    </alternativeName>
</protein>